<comment type="function">
    <text evidence="1">Involved in the binding of tRNA to the ribosomes.</text>
</comment>
<comment type="subunit">
    <text evidence="1">Part of the 30S ribosomal subunit.</text>
</comment>
<comment type="similarity">
    <text evidence="1">Belongs to the universal ribosomal protein uS10 family.</text>
</comment>
<name>RS10_NEIGO</name>
<proteinExistence type="inferred from homology"/>
<reference key="1">
    <citation type="journal article" date="1996" name="Microbiology">
        <title>Identification of an EF-Tu protein that is periplasm-associated and processed in Neisseria gonorrhoeae.</title>
        <authorList>
            <person name="Porcella S.F."/>
            <person name="Belland R.J."/>
            <person name="Judd R.C."/>
        </authorList>
    </citation>
    <scope>NUCLEOTIDE SEQUENCE [GENOMIC DNA]</scope>
    <source>
        <strain>MS11</strain>
    </source>
</reference>
<gene>
    <name evidence="1" type="primary">rpsJ</name>
</gene>
<keyword id="KW-0687">Ribonucleoprotein</keyword>
<keyword id="KW-0689">Ribosomal protein</keyword>
<organism>
    <name type="scientific">Neisseria gonorrhoeae</name>
    <dbReference type="NCBI Taxonomy" id="485"/>
    <lineage>
        <taxon>Bacteria</taxon>
        <taxon>Pseudomonadati</taxon>
        <taxon>Pseudomonadota</taxon>
        <taxon>Betaproteobacteria</taxon>
        <taxon>Neisseriales</taxon>
        <taxon>Neisseriaceae</taxon>
        <taxon>Neisseria</taxon>
    </lineage>
</organism>
<dbReference type="EMBL" id="L36380">
    <property type="protein sequence ID" value="AAB41518.1"/>
    <property type="molecule type" value="Genomic_DNA"/>
</dbReference>
<dbReference type="PIR" id="T10169">
    <property type="entry name" value="T10169"/>
</dbReference>
<dbReference type="SMR" id="P48851"/>
<dbReference type="GO" id="GO:1990904">
    <property type="term" value="C:ribonucleoprotein complex"/>
    <property type="evidence" value="ECO:0007669"/>
    <property type="project" value="UniProtKB-KW"/>
</dbReference>
<dbReference type="GO" id="GO:0005840">
    <property type="term" value="C:ribosome"/>
    <property type="evidence" value="ECO:0007669"/>
    <property type="project" value="UniProtKB-KW"/>
</dbReference>
<dbReference type="GO" id="GO:0003735">
    <property type="term" value="F:structural constituent of ribosome"/>
    <property type="evidence" value="ECO:0007669"/>
    <property type="project" value="InterPro"/>
</dbReference>
<dbReference type="GO" id="GO:0000049">
    <property type="term" value="F:tRNA binding"/>
    <property type="evidence" value="ECO:0007669"/>
    <property type="project" value="UniProtKB-UniRule"/>
</dbReference>
<dbReference type="GO" id="GO:0006412">
    <property type="term" value="P:translation"/>
    <property type="evidence" value="ECO:0007669"/>
    <property type="project" value="UniProtKB-UniRule"/>
</dbReference>
<dbReference type="FunFam" id="3.30.70.600:FF:000001">
    <property type="entry name" value="30S ribosomal protein S10"/>
    <property type="match status" value="1"/>
</dbReference>
<dbReference type="Gene3D" id="3.30.70.600">
    <property type="entry name" value="Ribosomal protein S10 domain"/>
    <property type="match status" value="1"/>
</dbReference>
<dbReference type="HAMAP" id="MF_00508">
    <property type="entry name" value="Ribosomal_uS10"/>
    <property type="match status" value="1"/>
</dbReference>
<dbReference type="InterPro" id="IPR001848">
    <property type="entry name" value="Ribosomal_uS10"/>
</dbReference>
<dbReference type="InterPro" id="IPR018268">
    <property type="entry name" value="Ribosomal_uS10_CS"/>
</dbReference>
<dbReference type="InterPro" id="IPR027486">
    <property type="entry name" value="Ribosomal_uS10_dom"/>
</dbReference>
<dbReference type="InterPro" id="IPR036838">
    <property type="entry name" value="Ribosomal_uS10_dom_sf"/>
</dbReference>
<dbReference type="NCBIfam" id="NF001861">
    <property type="entry name" value="PRK00596.1"/>
    <property type="match status" value="1"/>
</dbReference>
<dbReference type="NCBIfam" id="TIGR01049">
    <property type="entry name" value="rpsJ_bact"/>
    <property type="match status" value="1"/>
</dbReference>
<dbReference type="PANTHER" id="PTHR11700">
    <property type="entry name" value="30S RIBOSOMAL PROTEIN S10 FAMILY MEMBER"/>
    <property type="match status" value="1"/>
</dbReference>
<dbReference type="Pfam" id="PF00338">
    <property type="entry name" value="Ribosomal_S10"/>
    <property type="match status" value="1"/>
</dbReference>
<dbReference type="PRINTS" id="PR00971">
    <property type="entry name" value="RIBOSOMALS10"/>
</dbReference>
<dbReference type="SMART" id="SM01403">
    <property type="entry name" value="Ribosomal_S10"/>
    <property type="match status" value="1"/>
</dbReference>
<dbReference type="SUPFAM" id="SSF54999">
    <property type="entry name" value="Ribosomal protein S10"/>
    <property type="match status" value="1"/>
</dbReference>
<dbReference type="PROSITE" id="PS00361">
    <property type="entry name" value="RIBOSOMAL_S10"/>
    <property type="match status" value="1"/>
</dbReference>
<sequence length="103" mass="11883">MQTQKIRIRLKAYDYALIDRSAQEIVETAKRTGAVVKGPIPLPTKIERFNILRSPHMNKTSREQLEIRTHLRLMDIVDWTDKTTDALMKLDLPAGVDVEIKVQ</sequence>
<feature type="chain" id="PRO_0000146562" description="Small ribosomal subunit protein uS10">
    <location>
        <begin position="1"/>
        <end position="103"/>
    </location>
</feature>
<protein>
    <recommendedName>
        <fullName evidence="1">Small ribosomal subunit protein uS10</fullName>
    </recommendedName>
    <alternativeName>
        <fullName evidence="2">30S ribosomal protein S10</fullName>
    </alternativeName>
</protein>
<evidence type="ECO:0000255" key="1">
    <source>
        <dbReference type="HAMAP-Rule" id="MF_00508"/>
    </source>
</evidence>
<evidence type="ECO:0000305" key="2"/>
<accession>P48851</accession>